<proteinExistence type="evidence at protein level"/>
<keyword id="KW-0903">Direct protein sequencing</keyword>
<keyword id="KW-0274">FAD</keyword>
<keyword id="KW-0285">Flavoprotein</keyword>
<keyword id="KW-0503">Monooxygenase</keyword>
<keyword id="KW-0560">Oxidoreductase</keyword>
<gene>
    <name type="primary">styA</name>
    <name type="synonym">stdA</name>
</gene>
<organism>
    <name type="scientific">Pseudomonas sp</name>
    <dbReference type="NCBI Taxonomy" id="306"/>
    <lineage>
        <taxon>Bacteria</taxon>
        <taxon>Pseudomonadati</taxon>
        <taxon>Pseudomonadota</taxon>
        <taxon>Gammaproteobacteria</taxon>
        <taxon>Pseudomonadales</taxon>
        <taxon>Pseudomonadaceae</taxon>
        <taxon>Pseudomonas</taxon>
    </lineage>
</organism>
<feature type="chain" id="PRO_0000418832" description="Styrene monooxygenase StyA">
    <location>
        <begin position="1"/>
        <end position="415"/>
    </location>
</feature>
<sequence length="415" mass="46346">MKKRIGIVGAGTAGLHLGLFLRQHDVDVTVYTDRKPDEYSGLRLLNTVAHNAVTVQREVALDVNEWPSEEFGYFGHYYYVGGPQPMRFYGDLKAPSRAVDYRLYQPMLMRALEARGGKFCYDAVSAEDLEGLSEQYDLLVVCTGKYALGKVFEKQSENSPFEKPQRALCVGLFKGIKEAPIRAVTMSFSPGHGELIEIPTLSFNGMSTALVLENHIGSDLEVLAHTKYDDDPRAFLDLMLEKLGKHHPSVAERIDPAEFDLANSSLDILQGGVVPAFRDGHATLNNGKTIIGLGDIQATVDPVLGQGANMASYAAWILGEEILAHSVYDLRFSEHLERRRQDRVLCATRWTNFTLSALSALPPEFLAFLQILSQSREMADEFTDNFNYPERQWDRFSSPERIGQWCSQFAPTIAA</sequence>
<reference key="1">
    <citation type="journal article" date="1998" name="Appl. Environ. Microbiol.">
        <title>Towards a biocatalyst for (S)-styrene oxide production: characterization of the styrene degradation pathway of Pseudomonas sp. strain VLB120.</title>
        <authorList>
            <person name="Panke S."/>
            <person name="Witholt B."/>
            <person name="Schmid A."/>
            <person name="Wubbolts M.G."/>
        </authorList>
    </citation>
    <scope>NUCLEOTIDE SEQUENCE [GENOMIC DNA]</scope>
    <source>
        <strain>VLB120</strain>
    </source>
</reference>
<reference key="2">
    <citation type="journal article" date="2004" name="J. Bacteriol.">
        <title>Biochemical characterization of StyAB from Pseudomonas sp. strain VLB120 as a two-component flavin-diffusible monooxygenase.</title>
        <authorList>
            <person name="Otto K."/>
            <person name="Hofstetter K."/>
            <person name="Rothlisberger M."/>
            <person name="Witholt B."/>
            <person name="Schmid A."/>
        </authorList>
    </citation>
    <scope>PROTEIN SEQUENCE</scope>
    <scope>CATALYTIC ACTIVITY</scope>
    <scope>BIOPHYSICOCHEMICAL PROPERTIES</scope>
    <scope>SUBUNIT</scope>
    <scope>FUNCTION</scope>
</reference>
<name>STYA_PSESP</name>
<dbReference type="EC" id="1.14.14.11"/>
<dbReference type="EMBL" id="AF031161">
    <property type="protein sequence ID" value="AAC23718.1"/>
    <property type="molecule type" value="Genomic_DNA"/>
</dbReference>
<dbReference type="SMR" id="O50214"/>
<dbReference type="SABIO-RK" id="O50214"/>
<dbReference type="GO" id="GO:0004497">
    <property type="term" value="F:monooxygenase activity"/>
    <property type="evidence" value="ECO:0007669"/>
    <property type="project" value="UniProtKB-KW"/>
</dbReference>
<dbReference type="FunFam" id="3.30.9.40:FF:000001">
    <property type="entry name" value="Styrene monooxygenase StyA"/>
    <property type="match status" value="1"/>
</dbReference>
<dbReference type="FunFam" id="3.30.9.40:FF:000002">
    <property type="entry name" value="Styrene monooxygenase StyA"/>
    <property type="match status" value="1"/>
</dbReference>
<dbReference type="Gene3D" id="3.30.9.40">
    <property type="match status" value="2"/>
</dbReference>
<dbReference type="Gene3D" id="6.10.250.650">
    <property type="match status" value="1"/>
</dbReference>
<dbReference type="Gene3D" id="3.50.50.60">
    <property type="entry name" value="FAD/NAD(P)-binding domain"/>
    <property type="match status" value="2"/>
</dbReference>
<dbReference type="InterPro" id="IPR036188">
    <property type="entry name" value="FAD/NAD-bd_sf"/>
</dbReference>
<dbReference type="InterPro" id="IPR041654">
    <property type="entry name" value="StyA_sbd"/>
</dbReference>
<dbReference type="InterPro" id="IPR054801">
    <property type="entry name" value="StyMonoxStyA"/>
</dbReference>
<dbReference type="NCBIfam" id="NF045732">
    <property type="entry name" value="StyMonoxStyA"/>
    <property type="match status" value="1"/>
</dbReference>
<dbReference type="Pfam" id="PF17885">
    <property type="entry name" value="Smoa_sbd"/>
    <property type="match status" value="1"/>
</dbReference>
<dbReference type="SUPFAM" id="SSF51905">
    <property type="entry name" value="FAD/NAD(P)-binding domain"/>
    <property type="match status" value="1"/>
</dbReference>
<evidence type="ECO:0000269" key="1">
    <source>
    </source>
</evidence>
<evidence type="ECO:0000305" key="2"/>
<accession>O50214</accession>
<comment type="function">
    <text evidence="1">Styrene monooxygenase which catalyzes the first step in the aerobic styrene degradation pathway by enantioselective epoxidation of the vinyl side chain. In a two-component system, a reductase utilizes NADH to reduce FAD, which is then transferred to the oxygenase; the electron transfer is proposed to occur via a diffusing flavin.</text>
</comment>
<comment type="catalytic activity">
    <reaction evidence="1">
        <text>styrene + FADH2 + O2 = (S)-styrene oxide + FAD + H2O + H(+)</text>
        <dbReference type="Rhea" id="RHEA:31727"/>
        <dbReference type="ChEBI" id="CHEBI:15377"/>
        <dbReference type="ChEBI" id="CHEBI:15378"/>
        <dbReference type="ChEBI" id="CHEBI:15379"/>
        <dbReference type="ChEBI" id="CHEBI:27452"/>
        <dbReference type="ChEBI" id="CHEBI:51014"/>
        <dbReference type="ChEBI" id="CHEBI:57692"/>
        <dbReference type="ChEBI" id="CHEBI:58307"/>
        <dbReference type="EC" id="1.14.14.11"/>
    </reaction>
</comment>
<comment type="biophysicochemical properties">
    <kinetics>
        <KM evidence="1">0.45 mM for styrene (in the presence of styB, FAD and NADH)</KM>
        <Vmax evidence="1">2.1 umol/min/mg enzyme</Vmax>
    </kinetics>
</comment>
<comment type="pathway">
    <text>Aromatic compound metabolism.</text>
</comment>
<comment type="subunit">
    <text evidence="1">Homodimer. A direct interaction with the monooxygenase reductase component StyB seems not to be necessary for the enzymatic activity.</text>
</comment>
<comment type="similarity">
    <text evidence="2">Belongs to the StyA family.</text>
</comment>
<protein>
    <recommendedName>
        <fullName>Styrene monooxygenase StyA</fullName>
        <ecNumber>1.14.14.11</ecNumber>
    </recommendedName>
    <alternativeName>
        <fullName>Styrene monooxygenase large component</fullName>
    </alternativeName>
</protein>